<proteinExistence type="inferred from homology"/>
<evidence type="ECO:0000250" key="1"/>
<evidence type="ECO:0000256" key="2">
    <source>
        <dbReference type="SAM" id="MobiDB-lite"/>
    </source>
</evidence>
<evidence type="ECO:0000305" key="3"/>
<keyword id="KW-0010">Activator</keyword>
<keyword id="KW-0539">Nucleus</keyword>
<keyword id="KW-1185">Reference proteome</keyword>
<keyword id="KW-0804">Transcription</keyword>
<keyword id="KW-0805">Transcription regulation</keyword>
<comment type="function">
    <text evidence="1">Component of the Mediator complex, a coactivator involved in the regulated transcription of nearly all RNA polymerase II-dependent genes. Mediator functions as a bridge to convey information from gene-specific regulatory proteins to the basal RNA polymerase II transcription machinery. Mediator is recruited to promoters by direct interactions with regulatory proteins and serves as a scaffold for the assembly of a functional preinitiation complex with RNA polymerase II and the general transcription factors (By similarity).</text>
</comment>
<comment type="subunit">
    <text evidence="1">Component of the Mediator complex.</text>
</comment>
<comment type="subcellular location">
    <subcellularLocation>
        <location evidence="3">Nucleus</location>
    </subcellularLocation>
</comment>
<comment type="similarity">
    <text evidence="3">Belongs to the Mediator complex subunit 14 family.</text>
</comment>
<sequence length="1261" mass="146559">MPNGKQQHEVTESSSPPEIPHITANMIPLSNIIKYYTQEAYKQLTTAIENLSMNVNEESDIKRKKYFLNVIINLRQDFIKVYTLIKWASISKDVSKFIDLLNWFRIQEFHFENLIFQLNALTGYNAAKLPNSDIITALEVLYHGRPKLPSYNYIKSDNLSPQKILETLNDLNLVLMTRFALMDNIPKRFDYEIKDGRAYIRVSNEFEVSITVGNDLIIDNPEEYYKSPFYFIDFKFLFGANPESGLITFNDDKISTKLPTSSHKKLEKLVNQTLLTRGLQGLYELLHKYSNSFKIYLLAKQFQTLLINSRWRGNFQINYQTNKSLIVINYWSQHYLSRNWKSFIELGIDSHSNLNYRWFKNGQYCFGDQGNNELDKIFHLQRRNSNNGVTTSSNTISTSAMIAGIRRSTELSNETAIVDDNDNDNDDTNNTGETENEDLNVDLILNVVVNQHAKSIMSEIYSQLLTRFSETDVSMVSPHQLLLQISPKKSTVFAINPLTGFFYFIDPTPIQTYITKKINSPPPTLSQVSIKQSFIPESDMISYVIDQIIQLRLEVFNKEVNTKLATTAWINNGIIKLSDHELSKLTQFLIQNEEQEGDDNEEDSSTNTRLDSVLQSFKVQFYRRKNWPSSWFLINMISGVTTKSFWWVARIKSISGDWKIQWAQIIKFHGDNAKQELSPNESKVFDKPKRTVDCSIESEQLNFEFFKTLSTLSSNLILDHMILEELQVRSIKFIKLDWETIDDNKIFSKFKQNHDISLKRKNSHNINIDVNVDVADNTSTTTNTKYIRAPKLKYESMFLIYNDKLLPIYNSATILFLKIELVESNKMYLKLFGNLRNLQIKNTSEDIQKLHLNIDEANQYFEIDNTVDLSTVINEPKTLLLNLIFNTLNKLNSLIKILDQLNKSNVTVLDNSMDNITINIKDKYNDNNDKLIIIKLPEQATDSIQLLMKNGSTTTTDEIDLRNNNILEFELILKFLNQYLRESKSNNHNRQQISIIKIIQYLTEINPILQSTKAINQQLAELKRINSTNNNNNNAKRRSILKLSNGLYKLYFNLNIISLTHLQLVFFMNSNTGSNLKKIQRDKIMINLSLIKFDRFSKPNGNFQDSTNGHLIKISFKDSLINENLKFKNLFEIIFKNINELLITKSKQIKSLNQTENQQQQQPLKQEDNSDSAIIKKESQSIEDDLLDFGEYDNDIKPQQQEPQQNEKENSKTTSKENETVRPDDILIKLNYDYLLSMNNLQLMINEITKSCFQYLQQQQE</sequence>
<protein>
    <recommendedName>
        <fullName>Mediator of RNA polymerase II transcription subunit 14</fullName>
    </recommendedName>
    <alternativeName>
        <fullName>Mediator complex subunit 14</fullName>
    </alternativeName>
</protein>
<feature type="chain" id="PRO_0000304597" description="Mediator of RNA polymerase II transcription subunit 14">
    <location>
        <begin position="1"/>
        <end position="1261"/>
    </location>
</feature>
<feature type="region of interest" description="Disordered" evidence="2">
    <location>
        <begin position="1"/>
        <end position="21"/>
    </location>
</feature>
<feature type="region of interest" description="Disordered" evidence="2">
    <location>
        <begin position="413"/>
        <end position="435"/>
    </location>
</feature>
<feature type="region of interest" description="Disordered" evidence="2">
    <location>
        <begin position="1193"/>
        <end position="1220"/>
    </location>
</feature>
<feature type="compositionally biased region" description="Basic and acidic residues" evidence="2">
    <location>
        <begin position="1"/>
        <end position="11"/>
    </location>
</feature>
<feature type="compositionally biased region" description="Acidic residues" evidence="2">
    <location>
        <begin position="417"/>
        <end position="427"/>
    </location>
</feature>
<feature type="compositionally biased region" description="Basic and acidic residues" evidence="2">
    <location>
        <begin position="1205"/>
        <end position="1220"/>
    </location>
</feature>
<reference key="1">
    <citation type="journal article" date="2004" name="Proc. Natl. Acad. Sci. U.S.A.">
        <title>The diploid genome sequence of Candida albicans.</title>
        <authorList>
            <person name="Jones T."/>
            <person name="Federspiel N.A."/>
            <person name="Chibana H."/>
            <person name="Dungan J."/>
            <person name="Kalman S."/>
            <person name="Magee B.B."/>
            <person name="Newport G."/>
            <person name="Thorstenson Y.R."/>
            <person name="Agabian N."/>
            <person name="Magee P.T."/>
            <person name="Davis R.W."/>
            <person name="Scherer S."/>
        </authorList>
    </citation>
    <scope>NUCLEOTIDE SEQUENCE [LARGE SCALE GENOMIC DNA]</scope>
    <source>
        <strain>SC5314 / ATCC MYA-2876</strain>
    </source>
</reference>
<reference key="2">
    <citation type="journal article" date="2007" name="Genome Biol.">
        <title>Assembly of the Candida albicans genome into sixteen supercontigs aligned on the eight chromosomes.</title>
        <authorList>
            <person name="van het Hoog M."/>
            <person name="Rast T.J."/>
            <person name="Martchenko M."/>
            <person name="Grindle S."/>
            <person name="Dignard D."/>
            <person name="Hogues H."/>
            <person name="Cuomo C."/>
            <person name="Berriman M."/>
            <person name="Scherer S."/>
            <person name="Magee B.B."/>
            <person name="Whiteway M."/>
            <person name="Chibana H."/>
            <person name="Nantel A."/>
            <person name="Magee P.T."/>
        </authorList>
    </citation>
    <scope>GENOME REANNOTATION</scope>
    <source>
        <strain>SC5314 / ATCC MYA-2876</strain>
    </source>
</reference>
<reference key="3">
    <citation type="journal article" date="2013" name="Genome Biol.">
        <title>Assembly of a phased diploid Candida albicans genome facilitates allele-specific measurements and provides a simple model for repeat and indel structure.</title>
        <authorList>
            <person name="Muzzey D."/>
            <person name="Schwartz K."/>
            <person name="Weissman J.S."/>
            <person name="Sherlock G."/>
        </authorList>
    </citation>
    <scope>NUCLEOTIDE SEQUENCE [LARGE SCALE GENOMIC DNA]</scope>
    <scope>GENOME REANNOTATION</scope>
    <source>
        <strain>SC5314 / ATCC MYA-2876</strain>
    </source>
</reference>
<dbReference type="EMBL" id="CP017627">
    <property type="protein sequence ID" value="AOW29736.1"/>
    <property type="molecule type" value="Genomic_DNA"/>
</dbReference>
<dbReference type="RefSeq" id="XP_720653.2">
    <property type="nucleotide sequence ID" value="XM_715560.2"/>
</dbReference>
<dbReference type="BioGRID" id="1220766">
    <property type="interactions" value="3"/>
</dbReference>
<dbReference type="FunCoup" id="Q5AG31">
    <property type="interactions" value="277"/>
</dbReference>
<dbReference type="STRING" id="237561.Q5AG31"/>
<dbReference type="EnsemblFungi" id="C5_03160W_A-T">
    <property type="protein sequence ID" value="C5_03160W_A-T-p1"/>
    <property type="gene ID" value="C5_03160W_A"/>
</dbReference>
<dbReference type="GeneID" id="3637800"/>
<dbReference type="KEGG" id="cal:CAALFM_C503160WA"/>
<dbReference type="CGD" id="CAL0000182774">
    <property type="gene designation" value="MED14"/>
</dbReference>
<dbReference type="VEuPathDB" id="FungiDB:C5_03160W_A"/>
<dbReference type="eggNOG" id="KOG1875">
    <property type="taxonomic scope" value="Eukaryota"/>
</dbReference>
<dbReference type="HOGENOM" id="CLU_283151_0_0_1"/>
<dbReference type="InParanoid" id="Q5AG31"/>
<dbReference type="OrthoDB" id="205099at2759"/>
<dbReference type="PRO" id="PR:Q5AG31"/>
<dbReference type="Proteomes" id="UP000000559">
    <property type="component" value="Chromosome 5"/>
</dbReference>
<dbReference type="GO" id="GO:0070847">
    <property type="term" value="C:core mediator complex"/>
    <property type="evidence" value="ECO:0000318"/>
    <property type="project" value="GO_Central"/>
</dbReference>
<dbReference type="GO" id="GO:0016592">
    <property type="term" value="C:mediator complex"/>
    <property type="evidence" value="ECO:0000318"/>
    <property type="project" value="GO_Central"/>
</dbReference>
<dbReference type="GO" id="GO:0003712">
    <property type="term" value="F:transcription coregulator activity"/>
    <property type="evidence" value="ECO:0000318"/>
    <property type="project" value="GO_Central"/>
</dbReference>
<dbReference type="GO" id="GO:0006357">
    <property type="term" value="P:regulation of transcription by RNA polymerase II"/>
    <property type="evidence" value="ECO:0000318"/>
    <property type="project" value="GO_Central"/>
</dbReference>
<dbReference type="InterPro" id="IPR055122">
    <property type="entry name" value="Med14_N"/>
</dbReference>
<dbReference type="InterPro" id="IPR013947">
    <property type="entry name" value="Mediator_Med14"/>
</dbReference>
<dbReference type="PANTHER" id="PTHR12809">
    <property type="entry name" value="MEDIATOR COMPLEX SUBUNIT"/>
    <property type="match status" value="1"/>
</dbReference>
<dbReference type="PANTHER" id="PTHR12809:SF2">
    <property type="entry name" value="MEDIATOR OF RNA POLYMERASE II TRANSCRIPTION SUBUNIT 14"/>
    <property type="match status" value="1"/>
</dbReference>
<dbReference type="Pfam" id="PF08638">
    <property type="entry name" value="Med14"/>
    <property type="match status" value="1"/>
</dbReference>
<name>MED14_CANAL</name>
<accession>Q5AG31</accession>
<accession>A0A1D8PNN0</accession>
<accession>Q5AGG6</accession>
<organism>
    <name type="scientific">Candida albicans (strain SC5314 / ATCC MYA-2876)</name>
    <name type="common">Yeast</name>
    <dbReference type="NCBI Taxonomy" id="237561"/>
    <lineage>
        <taxon>Eukaryota</taxon>
        <taxon>Fungi</taxon>
        <taxon>Dikarya</taxon>
        <taxon>Ascomycota</taxon>
        <taxon>Saccharomycotina</taxon>
        <taxon>Pichiomycetes</taxon>
        <taxon>Debaryomycetaceae</taxon>
        <taxon>Candida/Lodderomyces clade</taxon>
        <taxon>Candida</taxon>
    </lineage>
</organism>
<gene>
    <name type="primary">MED14</name>
    <name type="synonym">RGR1</name>
    <name type="ordered locus">CAALFM_C503160WA</name>
    <name type="ORF">CaO19.11825</name>
    <name type="ORF">CaO19.4348</name>
</gene>